<evidence type="ECO:0000250" key="1"/>
<evidence type="ECO:0000250" key="2">
    <source>
        <dbReference type="UniProtKB" id="Q9NR56"/>
    </source>
</evidence>
<evidence type="ECO:0000255" key="3">
    <source>
        <dbReference type="PROSITE-ProRule" id="PRU00723"/>
    </source>
</evidence>
<evidence type="ECO:0000305" key="4"/>
<sequence>MAVSVTPIRDTKWLTLEVCREFQRGTCSRPDTECKFAHPSKSCQVENGRVIACFDSLKGRCSRENCKYLHPPPHLKTQLEINGRNNLIQQKNMAMLAQQMQLANAMMPGAPLQPVPMFSVAPSLATNASAAFNPYLGPVSPGLVPAEILPTAPMLVAGNPGVPVPAAAAAAAQKLMRTDRLEVCREYQRGNCNRGENDCRFAHPADSAMIDTNDNTVTVCMDYIKGRCSREKCKYFHPPAHLQAKIKAAQYQVNQAAAAQAAATAAAMGIPQAVLPPLPKRPALEKTNGATAVFNTGIFQYQQALANMQLQQHTAFLPPVPMVHGATPATVSAATTSATSVPFAATATANQIPIISAEHLTSHKYVTQM</sequence>
<comment type="function">
    <text evidence="1">Involved in pre-mRNA alternative splicing regulation. Binds to CUG triplet repeat in RNA (By similarity).</text>
</comment>
<comment type="subcellular location">
    <subcellularLocation>
        <location evidence="2">Nucleus</location>
    </subcellularLocation>
    <subcellularLocation>
        <location evidence="2">Cytoplasm</location>
    </subcellularLocation>
    <subcellularLocation>
        <location evidence="2">Cytoplasmic granule</location>
    </subcellularLocation>
</comment>
<comment type="similarity">
    <text evidence="4">Belongs to the muscleblind family.</text>
</comment>
<organism>
    <name type="scientific">Gallus gallus</name>
    <name type="common">Chicken</name>
    <dbReference type="NCBI Taxonomy" id="9031"/>
    <lineage>
        <taxon>Eukaryota</taxon>
        <taxon>Metazoa</taxon>
        <taxon>Chordata</taxon>
        <taxon>Craniata</taxon>
        <taxon>Vertebrata</taxon>
        <taxon>Euteleostomi</taxon>
        <taxon>Archelosauria</taxon>
        <taxon>Archosauria</taxon>
        <taxon>Dinosauria</taxon>
        <taxon>Saurischia</taxon>
        <taxon>Theropoda</taxon>
        <taxon>Coelurosauria</taxon>
        <taxon>Aves</taxon>
        <taxon>Neognathae</taxon>
        <taxon>Galloanserae</taxon>
        <taxon>Galliformes</taxon>
        <taxon>Phasianidae</taxon>
        <taxon>Phasianinae</taxon>
        <taxon>Gallus</taxon>
    </lineage>
</organism>
<dbReference type="EMBL" id="AJ719965">
    <property type="protein sequence ID" value="CAG31624.1"/>
    <property type="molecule type" value="mRNA"/>
</dbReference>
<dbReference type="RefSeq" id="NP_001026493.1">
    <property type="nucleotide sequence ID" value="NM_001031322.4"/>
</dbReference>
<dbReference type="RefSeq" id="XP_025009157.1">
    <property type="nucleotide sequence ID" value="XM_025153389.3"/>
</dbReference>
<dbReference type="RefSeq" id="XP_046779923.1">
    <property type="nucleotide sequence ID" value="XM_046923967.1"/>
</dbReference>
<dbReference type="SMR" id="Q5ZKW9"/>
<dbReference type="FunCoup" id="Q5ZKW9">
    <property type="interactions" value="2060"/>
</dbReference>
<dbReference type="STRING" id="9031.ENSGALP00000053764"/>
<dbReference type="PaxDb" id="9031-ENSGALP00000016852"/>
<dbReference type="GeneID" id="425033"/>
<dbReference type="KEGG" id="gga:425033"/>
<dbReference type="CTD" id="4154"/>
<dbReference type="VEuPathDB" id="HostDB:geneid_425033"/>
<dbReference type="eggNOG" id="KOG2494">
    <property type="taxonomic scope" value="Eukaryota"/>
</dbReference>
<dbReference type="HOGENOM" id="CLU_053536_0_0_1"/>
<dbReference type="InParanoid" id="Q5ZKW9"/>
<dbReference type="OrthoDB" id="6285980at2759"/>
<dbReference type="PRO" id="PR:Q5ZKW9"/>
<dbReference type="Proteomes" id="UP000000539">
    <property type="component" value="Chromosome 9"/>
</dbReference>
<dbReference type="Bgee" id="ENSGALG00000029190">
    <property type="expression patterns" value="Expressed in muscle tissue and 13 other cell types or tissues"/>
</dbReference>
<dbReference type="GO" id="GO:0005737">
    <property type="term" value="C:cytoplasm"/>
    <property type="evidence" value="ECO:0000318"/>
    <property type="project" value="GO_Central"/>
</dbReference>
<dbReference type="GO" id="GO:0005654">
    <property type="term" value="C:nucleoplasm"/>
    <property type="evidence" value="ECO:0000318"/>
    <property type="project" value="GO_Central"/>
</dbReference>
<dbReference type="GO" id="GO:0003723">
    <property type="term" value="F:RNA binding"/>
    <property type="evidence" value="ECO:0000318"/>
    <property type="project" value="GO_Central"/>
</dbReference>
<dbReference type="GO" id="GO:0008270">
    <property type="term" value="F:zinc ion binding"/>
    <property type="evidence" value="ECO:0007669"/>
    <property type="project" value="UniProtKB-KW"/>
</dbReference>
<dbReference type="GO" id="GO:0006397">
    <property type="term" value="P:mRNA processing"/>
    <property type="evidence" value="ECO:0007669"/>
    <property type="project" value="UniProtKB-KW"/>
</dbReference>
<dbReference type="GO" id="GO:0043484">
    <property type="term" value="P:regulation of RNA splicing"/>
    <property type="evidence" value="ECO:0000318"/>
    <property type="project" value="GO_Central"/>
</dbReference>
<dbReference type="GO" id="GO:0008380">
    <property type="term" value="P:RNA splicing"/>
    <property type="evidence" value="ECO:0007669"/>
    <property type="project" value="UniProtKB-KW"/>
</dbReference>
<dbReference type="FunFam" id="3.30.1370.210:FF:000004">
    <property type="entry name" value="Muscleblind like splicing regulator 1"/>
    <property type="match status" value="1"/>
</dbReference>
<dbReference type="FunFam" id="3.30.1370.210:FF:000002">
    <property type="entry name" value="Muscleblind-like 1 isoform 2"/>
    <property type="match status" value="1"/>
</dbReference>
<dbReference type="Gene3D" id="3.30.1370.210">
    <property type="match status" value="2"/>
</dbReference>
<dbReference type="InterPro" id="IPR054429">
    <property type="entry name" value="Znf-CCCH_Muscleblind-like"/>
</dbReference>
<dbReference type="InterPro" id="IPR000571">
    <property type="entry name" value="Znf_CCCH"/>
</dbReference>
<dbReference type="PANTHER" id="PTHR12675">
    <property type="entry name" value="MUSCLEBLIND-LIKE PROTEIN"/>
    <property type="match status" value="1"/>
</dbReference>
<dbReference type="PANTHER" id="PTHR12675:SF7">
    <property type="entry name" value="MUSCLEBLIND-LIKE PROTEIN 1"/>
    <property type="match status" value="1"/>
</dbReference>
<dbReference type="Pfam" id="PF00642">
    <property type="entry name" value="zf-CCCH"/>
    <property type="match status" value="1"/>
</dbReference>
<dbReference type="Pfam" id="PF22628">
    <property type="entry name" value="zf-CCCH_10"/>
    <property type="match status" value="2"/>
</dbReference>
<dbReference type="Pfam" id="PF14608">
    <property type="entry name" value="zf-CCCH_2"/>
    <property type="match status" value="1"/>
</dbReference>
<dbReference type="SMART" id="SM00356">
    <property type="entry name" value="ZnF_C3H1"/>
    <property type="match status" value="4"/>
</dbReference>
<dbReference type="PROSITE" id="PS50103">
    <property type="entry name" value="ZF_C3H1"/>
    <property type="match status" value="4"/>
</dbReference>
<protein>
    <recommendedName>
        <fullName>Muscleblind-like protein 1</fullName>
    </recommendedName>
</protein>
<keyword id="KW-0963">Cytoplasm</keyword>
<keyword id="KW-0479">Metal-binding</keyword>
<keyword id="KW-0507">mRNA processing</keyword>
<keyword id="KW-0508">mRNA splicing</keyword>
<keyword id="KW-0539">Nucleus</keyword>
<keyword id="KW-1185">Reference proteome</keyword>
<keyword id="KW-0677">Repeat</keyword>
<keyword id="KW-0694">RNA-binding</keyword>
<keyword id="KW-0862">Zinc</keyword>
<keyword id="KW-0863">Zinc-finger</keyword>
<proteinExistence type="evidence at transcript level"/>
<reference key="1">
    <citation type="journal article" date="2005" name="Genome Biol.">
        <title>Full-length cDNAs from chicken bursal lymphocytes to facilitate gene function analysis.</title>
        <authorList>
            <person name="Caldwell R.B."/>
            <person name="Kierzek A.M."/>
            <person name="Arakawa H."/>
            <person name="Bezzubov Y."/>
            <person name="Zaim J."/>
            <person name="Fiedler P."/>
            <person name="Kutter S."/>
            <person name="Blagodatski A."/>
            <person name="Kostovska D."/>
            <person name="Koter M."/>
            <person name="Plachy J."/>
            <person name="Carninci P."/>
            <person name="Hayashizaki Y."/>
            <person name="Buerstedde J.-M."/>
        </authorList>
    </citation>
    <scope>NUCLEOTIDE SEQUENCE [LARGE SCALE MRNA]</scope>
    <source>
        <strain>CB</strain>
        <tissue>Bursa of Fabricius</tissue>
    </source>
</reference>
<gene>
    <name type="primary">MBNL1</name>
    <name type="ORF">RCJMB04_8n15</name>
</gene>
<name>MBNL1_CHICK</name>
<accession>Q5ZKW9</accession>
<feature type="chain" id="PRO_0000274871" description="Muscleblind-like protein 1">
    <location>
        <begin position="1"/>
        <end position="369"/>
    </location>
</feature>
<feature type="zinc finger region" description="C3H1-type 1" evidence="3">
    <location>
        <begin position="13"/>
        <end position="41"/>
    </location>
</feature>
<feature type="zinc finger region" description="C3H1-type 2" evidence="3">
    <location>
        <begin position="47"/>
        <end position="73"/>
    </location>
</feature>
<feature type="zinc finger region" description="C3H1-type 3" evidence="3">
    <location>
        <begin position="178"/>
        <end position="206"/>
    </location>
</feature>
<feature type="zinc finger region" description="C3H1-type 4" evidence="3">
    <location>
        <begin position="214"/>
        <end position="240"/>
    </location>
</feature>